<organism>
    <name type="scientific">Desulfosudis oleivorans (strain DSM 6200 / JCM 39069 / Hxd3)</name>
    <name type="common">Desulfococcus oleovorans</name>
    <dbReference type="NCBI Taxonomy" id="96561"/>
    <lineage>
        <taxon>Bacteria</taxon>
        <taxon>Pseudomonadati</taxon>
        <taxon>Thermodesulfobacteriota</taxon>
        <taxon>Desulfobacteria</taxon>
        <taxon>Desulfobacterales</taxon>
        <taxon>Desulfosudaceae</taxon>
        <taxon>Desulfosudis</taxon>
    </lineage>
</organism>
<proteinExistence type="inferred from homology"/>
<reference key="1">
    <citation type="submission" date="2007-10" db="EMBL/GenBank/DDBJ databases">
        <title>Complete sequence of Desulfococcus oleovorans Hxd3.</title>
        <authorList>
            <consortium name="US DOE Joint Genome Institute"/>
            <person name="Copeland A."/>
            <person name="Lucas S."/>
            <person name="Lapidus A."/>
            <person name="Barry K."/>
            <person name="Glavina del Rio T."/>
            <person name="Dalin E."/>
            <person name="Tice H."/>
            <person name="Pitluck S."/>
            <person name="Kiss H."/>
            <person name="Brettin T."/>
            <person name="Bruce D."/>
            <person name="Detter J.C."/>
            <person name="Han C."/>
            <person name="Schmutz J."/>
            <person name="Larimer F."/>
            <person name="Land M."/>
            <person name="Hauser L."/>
            <person name="Kyrpides N."/>
            <person name="Kim E."/>
            <person name="Wawrik B."/>
            <person name="Richardson P."/>
        </authorList>
    </citation>
    <scope>NUCLEOTIDE SEQUENCE [LARGE SCALE GENOMIC DNA]</scope>
    <source>
        <strain>DSM 6200 / JCM 39069 / Hxd3</strain>
    </source>
</reference>
<protein>
    <recommendedName>
        <fullName evidence="1">Large ribosomal subunit protein bL27</fullName>
    </recommendedName>
    <alternativeName>
        <fullName evidence="3">50S ribosomal protein L27</fullName>
    </alternativeName>
</protein>
<gene>
    <name evidence="1" type="primary">rpmA</name>
    <name type="ordered locus">Dole_0087</name>
</gene>
<evidence type="ECO:0000255" key="1">
    <source>
        <dbReference type="HAMAP-Rule" id="MF_00539"/>
    </source>
</evidence>
<evidence type="ECO:0000256" key="2">
    <source>
        <dbReference type="SAM" id="MobiDB-lite"/>
    </source>
</evidence>
<evidence type="ECO:0000305" key="3"/>
<sequence>MAHKKAGGSSKNGRDSRGQRRGVKRFGGEKVRAGNILVRQLGTHFHPGNNVGLGRDYTLFAKIDGVVTYESSGARKQVSVYAD</sequence>
<accession>A8ZRY0</accession>
<comment type="similarity">
    <text evidence="1">Belongs to the bacterial ribosomal protein bL27 family.</text>
</comment>
<keyword id="KW-1185">Reference proteome</keyword>
<keyword id="KW-0687">Ribonucleoprotein</keyword>
<keyword id="KW-0689">Ribosomal protein</keyword>
<feature type="chain" id="PRO_1000128736" description="Large ribosomal subunit protein bL27">
    <location>
        <begin position="1"/>
        <end position="83"/>
    </location>
</feature>
<feature type="region of interest" description="Disordered" evidence="2">
    <location>
        <begin position="1"/>
        <end position="26"/>
    </location>
</feature>
<name>RL27_DESOH</name>
<dbReference type="EMBL" id="CP000859">
    <property type="protein sequence ID" value="ABW65897.1"/>
    <property type="molecule type" value="Genomic_DNA"/>
</dbReference>
<dbReference type="RefSeq" id="WP_012173516.1">
    <property type="nucleotide sequence ID" value="NC_009943.1"/>
</dbReference>
<dbReference type="SMR" id="A8ZRY0"/>
<dbReference type="STRING" id="96561.Dole_0087"/>
<dbReference type="KEGG" id="dol:Dole_0087"/>
<dbReference type="eggNOG" id="COG0211">
    <property type="taxonomic scope" value="Bacteria"/>
</dbReference>
<dbReference type="HOGENOM" id="CLU_095424_4_0_7"/>
<dbReference type="OrthoDB" id="9803474at2"/>
<dbReference type="Proteomes" id="UP000008561">
    <property type="component" value="Chromosome"/>
</dbReference>
<dbReference type="GO" id="GO:0022625">
    <property type="term" value="C:cytosolic large ribosomal subunit"/>
    <property type="evidence" value="ECO:0007669"/>
    <property type="project" value="TreeGrafter"/>
</dbReference>
<dbReference type="GO" id="GO:0003735">
    <property type="term" value="F:structural constituent of ribosome"/>
    <property type="evidence" value="ECO:0007669"/>
    <property type="project" value="InterPro"/>
</dbReference>
<dbReference type="GO" id="GO:0006412">
    <property type="term" value="P:translation"/>
    <property type="evidence" value="ECO:0007669"/>
    <property type="project" value="UniProtKB-UniRule"/>
</dbReference>
<dbReference type="FunFam" id="2.40.50.100:FF:000020">
    <property type="entry name" value="50S ribosomal protein L27"/>
    <property type="match status" value="1"/>
</dbReference>
<dbReference type="Gene3D" id="2.40.50.100">
    <property type="match status" value="1"/>
</dbReference>
<dbReference type="HAMAP" id="MF_00539">
    <property type="entry name" value="Ribosomal_bL27"/>
    <property type="match status" value="1"/>
</dbReference>
<dbReference type="InterPro" id="IPR001684">
    <property type="entry name" value="Ribosomal_bL27"/>
</dbReference>
<dbReference type="NCBIfam" id="TIGR00062">
    <property type="entry name" value="L27"/>
    <property type="match status" value="1"/>
</dbReference>
<dbReference type="PANTHER" id="PTHR15893:SF0">
    <property type="entry name" value="LARGE RIBOSOMAL SUBUNIT PROTEIN BL27M"/>
    <property type="match status" value="1"/>
</dbReference>
<dbReference type="PANTHER" id="PTHR15893">
    <property type="entry name" value="RIBOSOMAL PROTEIN L27"/>
    <property type="match status" value="1"/>
</dbReference>
<dbReference type="Pfam" id="PF01016">
    <property type="entry name" value="Ribosomal_L27"/>
    <property type="match status" value="1"/>
</dbReference>
<dbReference type="PRINTS" id="PR00063">
    <property type="entry name" value="RIBOSOMALL27"/>
</dbReference>
<dbReference type="SUPFAM" id="SSF110324">
    <property type="entry name" value="Ribosomal L27 protein-like"/>
    <property type="match status" value="1"/>
</dbReference>